<dbReference type="EMBL" id="CP000946">
    <property type="protein sequence ID" value="ACA79291.1"/>
    <property type="molecule type" value="Genomic_DNA"/>
</dbReference>
<dbReference type="RefSeq" id="WP_000490275.1">
    <property type="nucleotide sequence ID" value="NZ_MTFT01000024.1"/>
</dbReference>
<dbReference type="KEGG" id="ecl:EcolC_3680"/>
<dbReference type="HOGENOM" id="CLU_187346_2_0_6"/>
<dbReference type="GO" id="GO:0005886">
    <property type="term" value="C:plasma membrane"/>
    <property type="evidence" value="ECO:0007669"/>
    <property type="project" value="UniProtKB-SubCell"/>
</dbReference>
<dbReference type="HAMAP" id="MF_01361">
    <property type="entry name" value="UPF0391"/>
    <property type="match status" value="1"/>
</dbReference>
<dbReference type="InterPro" id="IPR009760">
    <property type="entry name" value="DUF1328"/>
</dbReference>
<dbReference type="NCBIfam" id="NF010229">
    <property type="entry name" value="PRK13682.1-4"/>
    <property type="match status" value="1"/>
</dbReference>
<dbReference type="NCBIfam" id="NF010230">
    <property type="entry name" value="PRK13682.1-5"/>
    <property type="match status" value="1"/>
</dbReference>
<dbReference type="Pfam" id="PF07043">
    <property type="entry name" value="DUF1328"/>
    <property type="match status" value="1"/>
</dbReference>
<dbReference type="PIRSF" id="PIRSF036466">
    <property type="entry name" value="UCP036466"/>
    <property type="match status" value="1"/>
</dbReference>
<keyword id="KW-1003">Cell membrane</keyword>
<keyword id="KW-0472">Membrane</keyword>
<keyword id="KW-0812">Transmembrane</keyword>
<keyword id="KW-1133">Transmembrane helix</keyword>
<gene>
    <name evidence="1" type="primary">ytjA</name>
    <name type="ordered locus">EcolC_3680</name>
</gene>
<reference key="1">
    <citation type="submission" date="2008-02" db="EMBL/GenBank/DDBJ databases">
        <title>Complete sequence of Escherichia coli C str. ATCC 8739.</title>
        <authorList>
            <person name="Copeland A."/>
            <person name="Lucas S."/>
            <person name="Lapidus A."/>
            <person name="Glavina del Rio T."/>
            <person name="Dalin E."/>
            <person name="Tice H."/>
            <person name="Bruce D."/>
            <person name="Goodwin L."/>
            <person name="Pitluck S."/>
            <person name="Kiss H."/>
            <person name="Brettin T."/>
            <person name="Detter J.C."/>
            <person name="Han C."/>
            <person name="Kuske C.R."/>
            <person name="Schmutz J."/>
            <person name="Larimer F."/>
            <person name="Land M."/>
            <person name="Hauser L."/>
            <person name="Kyrpides N."/>
            <person name="Mikhailova N."/>
            <person name="Ingram L."/>
            <person name="Richardson P."/>
        </authorList>
    </citation>
    <scope>NUCLEOTIDE SEQUENCE [LARGE SCALE GENOMIC DNA]</scope>
    <source>
        <strain>ATCC 8739 / DSM 1576 / NBRC 3972 / NCIMB 8545 / WDCM 00012 / Crooks</strain>
    </source>
</reference>
<comment type="subcellular location">
    <subcellularLocation>
        <location evidence="1">Cell membrane</location>
        <topology evidence="1">Multi-pass membrane protein</topology>
    </subcellularLocation>
</comment>
<comment type="similarity">
    <text evidence="1">Belongs to the UPF0391 family.</text>
</comment>
<accession>B1IS43</accession>
<feature type="chain" id="PRO_1000086961" description="UPF0391 membrane protein YtjA">
    <location>
        <begin position="1"/>
        <end position="53"/>
    </location>
</feature>
<feature type="transmembrane region" description="Helical" evidence="1">
    <location>
        <begin position="4"/>
        <end position="24"/>
    </location>
</feature>
<feature type="transmembrane region" description="Helical" evidence="1">
    <location>
        <begin position="30"/>
        <end position="48"/>
    </location>
</feature>
<organism>
    <name type="scientific">Escherichia coli (strain ATCC 8739 / DSM 1576 / NBRC 3972 / NCIMB 8545 / WDCM 00012 / Crooks)</name>
    <dbReference type="NCBI Taxonomy" id="481805"/>
    <lineage>
        <taxon>Bacteria</taxon>
        <taxon>Pseudomonadati</taxon>
        <taxon>Pseudomonadota</taxon>
        <taxon>Gammaproteobacteria</taxon>
        <taxon>Enterobacterales</taxon>
        <taxon>Enterobacteriaceae</taxon>
        <taxon>Escherichia</taxon>
    </lineage>
</organism>
<proteinExistence type="inferred from homology"/>
<protein>
    <recommendedName>
        <fullName evidence="1">UPF0391 membrane protein YtjA</fullName>
    </recommendedName>
</protein>
<sequence length="53" mass="5536">MFRWGIIFLVIALIAAALGFGGLAGTAAGAAKIVFVVGIILFLVSLFMGRKRP</sequence>
<evidence type="ECO:0000255" key="1">
    <source>
        <dbReference type="HAMAP-Rule" id="MF_01361"/>
    </source>
</evidence>
<name>YTJA_ECOLC</name>